<sequence length="101" mass="11720">MAKLALIEREKKRARLVAKFAAKREALKAIIEDQSKSEEERYEARLELQQLPRNANPTRQRNRCAITGRPRGTFRKFGLARNKIREIAFRGEIPGLTKASW</sequence>
<keyword id="KW-1185">Reference proteome</keyword>
<keyword id="KW-0687">Ribonucleoprotein</keyword>
<keyword id="KW-0689">Ribosomal protein</keyword>
<keyword id="KW-0694">RNA-binding</keyword>
<keyword id="KW-0699">rRNA-binding</keyword>
<name>RS14_BURM1</name>
<reference key="1">
    <citation type="submission" date="2007-10" db="EMBL/GenBank/DDBJ databases">
        <title>Complete sequence of chromosome 1 of Burkholderia multivorans ATCC 17616.</title>
        <authorList>
            <person name="Copeland A."/>
            <person name="Lucas S."/>
            <person name="Lapidus A."/>
            <person name="Barry K."/>
            <person name="Glavina del Rio T."/>
            <person name="Dalin E."/>
            <person name="Tice H."/>
            <person name="Pitluck S."/>
            <person name="Chain P."/>
            <person name="Malfatti S."/>
            <person name="Shin M."/>
            <person name="Vergez L."/>
            <person name="Schmutz J."/>
            <person name="Larimer F."/>
            <person name="Land M."/>
            <person name="Hauser L."/>
            <person name="Kyrpides N."/>
            <person name="Kim E."/>
            <person name="Tiedje J."/>
            <person name="Richardson P."/>
        </authorList>
    </citation>
    <scope>NUCLEOTIDE SEQUENCE [LARGE SCALE GENOMIC DNA]</scope>
    <source>
        <strain>ATCC 17616 / 249</strain>
    </source>
</reference>
<reference key="2">
    <citation type="submission" date="2007-04" db="EMBL/GenBank/DDBJ databases">
        <title>Complete genome sequence of Burkholderia multivorans ATCC 17616.</title>
        <authorList>
            <person name="Ohtsubo Y."/>
            <person name="Yamashita A."/>
            <person name="Kurokawa K."/>
            <person name="Takami H."/>
            <person name="Yuhara S."/>
            <person name="Nishiyama E."/>
            <person name="Endo R."/>
            <person name="Miyazaki R."/>
            <person name="Ono A."/>
            <person name="Yano K."/>
            <person name="Ito M."/>
            <person name="Sota M."/>
            <person name="Yuji N."/>
            <person name="Hattori M."/>
            <person name="Tsuda M."/>
        </authorList>
    </citation>
    <scope>NUCLEOTIDE SEQUENCE [LARGE SCALE GENOMIC DNA]</scope>
    <source>
        <strain>ATCC 17616 / 249</strain>
    </source>
</reference>
<feature type="chain" id="PRO_1000128332" description="Small ribosomal subunit protein uS14">
    <location>
        <begin position="1"/>
        <end position="101"/>
    </location>
</feature>
<gene>
    <name evidence="1" type="primary">rpsN</name>
    <name type="ordered locus">Bmul_0262</name>
    <name type="ordered locus">BMULJ_02992</name>
</gene>
<organism>
    <name type="scientific">Burkholderia multivorans (strain ATCC 17616 / 249)</name>
    <dbReference type="NCBI Taxonomy" id="395019"/>
    <lineage>
        <taxon>Bacteria</taxon>
        <taxon>Pseudomonadati</taxon>
        <taxon>Pseudomonadota</taxon>
        <taxon>Betaproteobacteria</taxon>
        <taxon>Burkholderiales</taxon>
        <taxon>Burkholderiaceae</taxon>
        <taxon>Burkholderia</taxon>
        <taxon>Burkholderia cepacia complex</taxon>
    </lineage>
</organism>
<proteinExistence type="inferred from homology"/>
<dbReference type="EMBL" id="CP000868">
    <property type="protein sequence ID" value="ABX13957.1"/>
    <property type="molecule type" value="Genomic_DNA"/>
</dbReference>
<dbReference type="EMBL" id="AP009385">
    <property type="protein sequence ID" value="BAG44877.1"/>
    <property type="molecule type" value="Genomic_DNA"/>
</dbReference>
<dbReference type="RefSeq" id="WP_006400648.1">
    <property type="nucleotide sequence ID" value="NC_010804.1"/>
</dbReference>
<dbReference type="SMR" id="A9ADK6"/>
<dbReference type="STRING" id="395019.BMULJ_02992"/>
<dbReference type="GeneID" id="93171004"/>
<dbReference type="KEGG" id="bmj:BMULJ_02992"/>
<dbReference type="KEGG" id="bmu:Bmul_0262"/>
<dbReference type="eggNOG" id="COG0199">
    <property type="taxonomic scope" value="Bacteria"/>
</dbReference>
<dbReference type="HOGENOM" id="CLU_139869_0_1_4"/>
<dbReference type="Proteomes" id="UP000008815">
    <property type="component" value="Chromosome 1"/>
</dbReference>
<dbReference type="GO" id="GO:0005737">
    <property type="term" value="C:cytoplasm"/>
    <property type="evidence" value="ECO:0007669"/>
    <property type="project" value="UniProtKB-ARBA"/>
</dbReference>
<dbReference type="GO" id="GO:0015935">
    <property type="term" value="C:small ribosomal subunit"/>
    <property type="evidence" value="ECO:0007669"/>
    <property type="project" value="TreeGrafter"/>
</dbReference>
<dbReference type="GO" id="GO:0019843">
    <property type="term" value="F:rRNA binding"/>
    <property type="evidence" value="ECO:0007669"/>
    <property type="project" value="UniProtKB-UniRule"/>
</dbReference>
<dbReference type="GO" id="GO:0003735">
    <property type="term" value="F:structural constituent of ribosome"/>
    <property type="evidence" value="ECO:0007669"/>
    <property type="project" value="InterPro"/>
</dbReference>
<dbReference type="GO" id="GO:0006412">
    <property type="term" value="P:translation"/>
    <property type="evidence" value="ECO:0007669"/>
    <property type="project" value="UniProtKB-UniRule"/>
</dbReference>
<dbReference type="FunFam" id="1.10.287.1480:FF:000001">
    <property type="entry name" value="30S ribosomal protein S14"/>
    <property type="match status" value="1"/>
</dbReference>
<dbReference type="Gene3D" id="1.10.287.1480">
    <property type="match status" value="1"/>
</dbReference>
<dbReference type="HAMAP" id="MF_00537">
    <property type="entry name" value="Ribosomal_uS14_1"/>
    <property type="match status" value="1"/>
</dbReference>
<dbReference type="InterPro" id="IPR001209">
    <property type="entry name" value="Ribosomal_uS14"/>
</dbReference>
<dbReference type="InterPro" id="IPR023036">
    <property type="entry name" value="Ribosomal_uS14_bac/plastid"/>
</dbReference>
<dbReference type="NCBIfam" id="NF006477">
    <property type="entry name" value="PRK08881.1"/>
    <property type="match status" value="1"/>
</dbReference>
<dbReference type="PANTHER" id="PTHR19836">
    <property type="entry name" value="30S RIBOSOMAL PROTEIN S14"/>
    <property type="match status" value="1"/>
</dbReference>
<dbReference type="PANTHER" id="PTHR19836:SF19">
    <property type="entry name" value="SMALL RIBOSOMAL SUBUNIT PROTEIN US14M"/>
    <property type="match status" value="1"/>
</dbReference>
<dbReference type="Pfam" id="PF00253">
    <property type="entry name" value="Ribosomal_S14"/>
    <property type="match status" value="1"/>
</dbReference>
<dbReference type="SUPFAM" id="SSF57716">
    <property type="entry name" value="Glucocorticoid receptor-like (DNA-binding domain)"/>
    <property type="match status" value="1"/>
</dbReference>
<comment type="function">
    <text evidence="1">Binds 16S rRNA, required for the assembly of 30S particles and may also be responsible for determining the conformation of the 16S rRNA at the A site.</text>
</comment>
<comment type="subunit">
    <text evidence="1">Part of the 30S ribosomal subunit. Contacts proteins S3 and S10.</text>
</comment>
<comment type="similarity">
    <text evidence="1">Belongs to the universal ribosomal protein uS14 family.</text>
</comment>
<protein>
    <recommendedName>
        <fullName evidence="1">Small ribosomal subunit protein uS14</fullName>
    </recommendedName>
    <alternativeName>
        <fullName evidence="2">30S ribosomal protein S14</fullName>
    </alternativeName>
</protein>
<accession>A9ADK6</accession>
<evidence type="ECO:0000255" key="1">
    <source>
        <dbReference type="HAMAP-Rule" id="MF_00537"/>
    </source>
</evidence>
<evidence type="ECO:0000305" key="2"/>